<feature type="signal peptide" evidence="2">
    <location>
        <begin position="1"/>
        <end position="26"/>
    </location>
</feature>
<feature type="chain" id="PRO_0000004162" description="Nucleobindin-1">
    <location>
        <begin position="27"/>
        <end position="461"/>
    </location>
</feature>
<feature type="domain" description="EF-hand 1" evidence="5">
    <location>
        <begin position="240"/>
        <end position="275"/>
    </location>
</feature>
<feature type="domain" description="EF-hand 2" evidence="5">
    <location>
        <begin position="292"/>
        <end position="327"/>
    </location>
</feature>
<feature type="DNA-binding region" evidence="4">
    <location>
        <begin position="172"/>
        <end position="218"/>
    </location>
</feature>
<feature type="region of interest" description="O-glycosylated at one site">
    <location>
        <begin position="42"/>
        <end position="51"/>
    </location>
</feature>
<feature type="region of interest" description="Disordered" evidence="6">
    <location>
        <begin position="193"/>
        <end position="221"/>
    </location>
</feature>
<feature type="region of interest" description="Binds to GNAI2 and GNAI3" evidence="1">
    <location>
        <begin position="228"/>
        <end position="321"/>
    </location>
</feature>
<feature type="region of interest" description="Disordered" evidence="6">
    <location>
        <begin position="368"/>
        <end position="461"/>
    </location>
</feature>
<feature type="coiled-coil region" evidence="4">
    <location>
        <begin position="150"/>
        <end position="218"/>
    </location>
</feature>
<feature type="coiled-coil region" evidence="4">
    <location>
        <begin position="341"/>
        <end position="407"/>
    </location>
</feature>
<feature type="short sequence motif" description="GBA" evidence="10">
    <location>
        <begin position="303"/>
        <end position="333"/>
    </location>
</feature>
<feature type="compositionally biased region" description="Basic and acidic residues" evidence="6">
    <location>
        <begin position="193"/>
        <end position="210"/>
    </location>
</feature>
<feature type="compositionally biased region" description="Basic and acidic residues" evidence="6">
    <location>
        <begin position="437"/>
        <end position="461"/>
    </location>
</feature>
<feature type="binding site" evidence="5 7">
    <location>
        <position position="253"/>
    </location>
    <ligand>
        <name>Ca(2+)</name>
        <dbReference type="ChEBI" id="CHEBI:29108"/>
        <label>1</label>
    </ligand>
</feature>
<feature type="binding site" evidence="5 7">
    <location>
        <position position="255"/>
    </location>
    <ligand>
        <name>Ca(2+)</name>
        <dbReference type="ChEBI" id="CHEBI:29108"/>
        <label>1</label>
    </ligand>
</feature>
<feature type="binding site" evidence="5 7">
    <location>
        <position position="257"/>
    </location>
    <ligand>
        <name>Ca(2+)</name>
        <dbReference type="ChEBI" id="CHEBI:29108"/>
        <label>1</label>
    </ligand>
</feature>
<feature type="binding site" evidence="5 7">
    <location>
        <position position="264"/>
    </location>
    <ligand>
        <name>Ca(2+)</name>
        <dbReference type="ChEBI" id="CHEBI:29108"/>
        <label>1</label>
    </ligand>
</feature>
<feature type="binding site" evidence="5 7">
    <location>
        <position position="305"/>
    </location>
    <ligand>
        <name>Ca(2+)</name>
        <dbReference type="ChEBI" id="CHEBI:29108"/>
        <label>2</label>
    </ligand>
</feature>
<feature type="binding site" evidence="5 7">
    <location>
        <position position="307"/>
    </location>
    <ligand>
        <name>Ca(2+)</name>
        <dbReference type="ChEBI" id="CHEBI:29108"/>
        <label>2</label>
    </ligand>
</feature>
<feature type="binding site" evidence="5 7">
    <location>
        <position position="309"/>
    </location>
    <ligand>
        <name>Ca(2+)</name>
        <dbReference type="ChEBI" id="CHEBI:29108"/>
        <label>2</label>
    </ligand>
</feature>
<feature type="binding site" evidence="5 7">
    <location>
        <position position="316"/>
    </location>
    <ligand>
        <name>Ca(2+)</name>
        <dbReference type="ChEBI" id="CHEBI:29108"/>
        <label>2</label>
    </ligand>
</feature>
<feature type="modified residue" description="Phosphoserine; by FAM20C" evidence="9">
    <location>
        <position position="86"/>
    </location>
</feature>
<feature type="modified residue" description="Phosphothreonine; by FAM20C" evidence="9 13">
    <location>
        <position position="148"/>
    </location>
</feature>
<feature type="modified residue" description="Phosphoserine; by FAM20C" evidence="9">
    <location>
        <position position="369"/>
    </location>
</feature>
<feature type="sequence variant" id="VAR_012151" evidence="11">
    <original>LP</original>
    <variation>S</variation>
    <location>
        <begin position="13"/>
        <end position="14"/>
    </location>
</feature>
<feature type="sequence variant" id="VAR_061087" description="In dbSNP:rs35456905.">
    <original>M</original>
    <variation>V</variation>
    <location>
        <position position="338"/>
    </location>
</feature>
<feature type="sequence variant" id="VAR_012152" description="In dbSNP:rs200372110." evidence="11">
    <original>R</original>
    <variation>Q</variation>
    <location>
        <position position="399"/>
    </location>
</feature>
<feature type="sequence conflict" description="In Ref. 1; AAA36383." evidence="12" ref="1">
    <original>HV</original>
    <variation>QL</variation>
    <location>
        <begin position="299"/>
        <end position="300"/>
    </location>
</feature>
<feature type="sequence conflict" description="In Ref. 1; AAA36383 and 2; AAB60431." evidence="12" ref="1 2">
    <original>Q</original>
    <variation>K</variation>
    <location>
        <position position="385"/>
    </location>
</feature>
<feature type="sequence conflict" description="In Ref. 1; AAA36383 and 2; AAB60431." evidence="12" ref="1 2">
    <original>QQ</original>
    <variation>LL</variation>
    <location>
        <begin position="390"/>
        <end position="391"/>
    </location>
</feature>
<feature type="helix" evidence="14">
    <location>
        <begin position="245"/>
        <end position="252"/>
    </location>
</feature>
<feature type="strand" evidence="14">
    <location>
        <begin position="258"/>
        <end position="261"/>
    </location>
</feature>
<feature type="helix" evidence="14">
    <location>
        <begin position="262"/>
        <end position="274"/>
    </location>
</feature>
<feature type="helix" evidence="14">
    <location>
        <begin position="285"/>
        <end position="288"/>
    </location>
</feature>
<feature type="helix" evidence="14">
    <location>
        <begin position="291"/>
        <end position="303"/>
    </location>
</feature>
<feature type="strand" evidence="14">
    <location>
        <begin position="309"/>
        <end position="313"/>
    </location>
</feature>
<feature type="helix" evidence="14">
    <location>
        <begin position="314"/>
        <end position="322"/>
    </location>
</feature>
<sequence length="461" mass="53879">MPPSGPRGTLLLLPLLLLLLLRAVLAVPLERGAPNKEETPATESPDTGLYYHRYLQEVIDVLETDGHFREKLQAANAEDIKSGKLSRELDFVSHHVRTKLDELKRQEVSRLRMLLKAKMDAEQDPNVQVDHLNLLKQFEHLDPQNQHTFEARDLELLIQTATRDLAQYDAAHHEEFKRYEMLKEHERRRYLESLGEEQRKEAERKLEEQQRRHREHPKVNVPGSQAQLKEVWEELDGLDPNRFNPKTFFILHDINSDGVLDEQELEALFTKELEKVYDPKNEEDDMREMEEERLRMREHVMKNVDTNQDRLVTLEEFLASTQRKEFGDTGEGWETVEMHPAYTEEELRRFEEELAAREAELNAKAQRLSQETEALGRSQGRLEAQKRELQQAVLHMEQRKQQQQQQQGHKAPAAHPEGQLKFHPDTDDVPVPAPAGDQKEVDTSEKKLLERLPEVEVPQHL</sequence>
<comment type="function">
    <text evidence="2 3">Major calcium-binding protein of the Golgi which may have a role in calcium homeostasis (By similarity). Acts as a non-receptor guanine nucleotide exchange factor which binds to and activates alpha subunits of guanine nucleotide-binding proteins (G proteins) (By similarity).</text>
</comment>
<comment type="subunit">
    <text evidence="3">Interacts (via GBA motif) with guanine nucleotide-binding protein G(i) alpha subunits GNAI1, GNAI2 and GNAI3 with higher affinity for GNAI1 and GNAI3 than for GNAI2. Preferentially interacts with inactive rather than active GNAI3. Interaction with GNAI3 is inhibited when NUCB1 binds calcium, probably due to a conformational change which renders the GBA motif inaccessible.</text>
</comment>
<comment type="interaction">
    <interactant intactId="EBI-2622179">
        <id>Q02818</id>
    </interactant>
    <interactant intactId="EBI-77613">
        <id>P05067</id>
        <label>APP</label>
    </interactant>
    <organismsDiffer>false</organismsDiffer>
    <experiments>3</experiments>
</comment>
<comment type="interaction">
    <interactant intactId="EBI-2622179">
        <id>Q02818</id>
    </interactant>
    <interactant intactId="EBI-2296670">
        <id>P80303</id>
        <label>NUCB2</label>
    </interactant>
    <organismsDiffer>false</organismsDiffer>
    <experiments>2</experiments>
</comment>
<comment type="interaction">
    <interactant intactId="EBI-2622179">
        <id>Q02818</id>
    </interactant>
    <interactant intactId="EBI-6927928">
        <id>PRO_0000045603</id>
        <dbReference type="UniProtKB" id="Q99IB8"/>
    </interactant>
    <organismsDiffer>true</organismsDiffer>
    <experiments>3</experiments>
</comment>
<comment type="subcellular location">
    <subcellularLocation>
        <location evidence="3">Golgi apparatus</location>
        <location evidence="3">cis-Golgi network membrane</location>
        <topology evidence="3">Peripheral membrane protein</topology>
        <orientation evidence="3">Lumenal side</orientation>
    </subcellularLocation>
    <subcellularLocation>
        <location evidence="3">Cytoplasm</location>
    </subcellularLocation>
    <subcellularLocation>
        <location evidence="3">Secreted</location>
    </subcellularLocation>
    <text evidence="3">A small fraction of the protein may be cytoplasmic.</text>
</comment>
<comment type="tissue specificity">
    <text>Expressed both in fetal and adult heart, lung, liver, kidney and brain, and in adult skeletal muscle, placenta and pancreas.</text>
</comment>
<comment type="domain">
    <text evidence="7">The EF-hand domains are unfolded in the absence of Ca(2+) and fold upon Ca(2+) addition.</text>
</comment>
<comment type="domain">
    <text evidence="10">The GBA (G-alpha binding and activating) motif mediates binding to the alpha subunits of guanine nucleotide-binding proteins (G proteins).</text>
</comment>
<comment type="PTM">
    <text evidence="8">O-glycosylated.</text>
</comment>
<comment type="miscellaneous">
    <text>Discovered as DNA-binding protein in the serum of lupus-prone mice.</text>
</comment>
<comment type="similarity">
    <text evidence="12">Belongs to the nucleobindin family.</text>
</comment>
<organism>
    <name type="scientific">Homo sapiens</name>
    <name type="common">Human</name>
    <dbReference type="NCBI Taxonomy" id="9606"/>
    <lineage>
        <taxon>Eukaryota</taxon>
        <taxon>Metazoa</taxon>
        <taxon>Chordata</taxon>
        <taxon>Craniata</taxon>
        <taxon>Vertebrata</taxon>
        <taxon>Euteleostomi</taxon>
        <taxon>Mammalia</taxon>
        <taxon>Eutheria</taxon>
        <taxon>Euarchontoglires</taxon>
        <taxon>Primates</taxon>
        <taxon>Haplorrhini</taxon>
        <taxon>Catarrhini</taxon>
        <taxon>Hominidae</taxon>
        <taxon>Homo</taxon>
    </lineage>
</organism>
<reference key="1">
    <citation type="journal article" date="1992" name="Biochem. Biophys. Res. Commun.">
        <title>Molecular cloning of nucleobindin, a novel DNA-binding protein that contains both a signal peptide and a leucine zipper structure.</title>
        <authorList>
            <person name="Miura K."/>
            <person name="Titani K."/>
            <person name="Kurosawa Y."/>
            <person name="Kanai Y."/>
        </authorList>
    </citation>
    <scope>NUCLEOTIDE SEQUENCE [MRNA]</scope>
</reference>
<reference key="2">
    <citation type="journal article" date="1996" name="Genomics">
        <title>Organization of the human gene for nucleobindin (NUC) and its chromosomal assignment to 19q13.2-q13.4.</title>
        <authorList>
            <person name="Miura K."/>
            <person name="Hirai M."/>
            <person name="Kanai Y."/>
            <person name="Kurosawa Y."/>
        </authorList>
    </citation>
    <scope>NUCLEOTIDE SEQUENCE [GENOMIC DNA]</scope>
    <scope>VARIANTS 13-LEU-PRO-14 DELINS SER AND GLN-399</scope>
    <scope>SEQUENCE REVISION TO 299-300</scope>
    <source>
        <tissue>Placenta</tissue>
    </source>
</reference>
<reference key="3">
    <citation type="submission" date="2003-08" db="EMBL/GenBank/DDBJ databases">
        <title>Cloning of human full-length CDSs in BD Creator(TM) system donor vector.</title>
        <authorList>
            <person name="Kalnine N."/>
            <person name="Chen X."/>
            <person name="Rolfs A."/>
            <person name="Halleck A."/>
            <person name="Hines L."/>
            <person name="Eisenstein S."/>
            <person name="Koundinya M."/>
            <person name="Raphael J."/>
            <person name="Moreira D."/>
            <person name="Kelley T."/>
            <person name="LaBaer J."/>
            <person name="Lin Y."/>
            <person name="Phelan M."/>
            <person name="Farmer A."/>
        </authorList>
    </citation>
    <scope>NUCLEOTIDE SEQUENCE [LARGE SCALE MRNA]</scope>
</reference>
<reference key="4">
    <citation type="journal article" date="2004" name="Nat. Genet.">
        <title>Complete sequencing and characterization of 21,243 full-length human cDNAs.</title>
        <authorList>
            <person name="Ota T."/>
            <person name="Suzuki Y."/>
            <person name="Nishikawa T."/>
            <person name="Otsuki T."/>
            <person name="Sugiyama T."/>
            <person name="Irie R."/>
            <person name="Wakamatsu A."/>
            <person name="Hayashi K."/>
            <person name="Sato H."/>
            <person name="Nagai K."/>
            <person name="Kimura K."/>
            <person name="Makita H."/>
            <person name="Sekine M."/>
            <person name="Obayashi M."/>
            <person name="Nishi T."/>
            <person name="Shibahara T."/>
            <person name="Tanaka T."/>
            <person name="Ishii S."/>
            <person name="Yamamoto J."/>
            <person name="Saito K."/>
            <person name="Kawai Y."/>
            <person name="Isono Y."/>
            <person name="Nakamura Y."/>
            <person name="Nagahari K."/>
            <person name="Murakami K."/>
            <person name="Yasuda T."/>
            <person name="Iwayanagi T."/>
            <person name="Wagatsuma M."/>
            <person name="Shiratori A."/>
            <person name="Sudo H."/>
            <person name="Hosoiri T."/>
            <person name="Kaku Y."/>
            <person name="Kodaira H."/>
            <person name="Kondo H."/>
            <person name="Sugawara M."/>
            <person name="Takahashi M."/>
            <person name="Kanda K."/>
            <person name="Yokoi T."/>
            <person name="Furuya T."/>
            <person name="Kikkawa E."/>
            <person name="Omura Y."/>
            <person name="Abe K."/>
            <person name="Kamihara K."/>
            <person name="Katsuta N."/>
            <person name="Sato K."/>
            <person name="Tanikawa M."/>
            <person name="Yamazaki M."/>
            <person name="Ninomiya K."/>
            <person name="Ishibashi T."/>
            <person name="Yamashita H."/>
            <person name="Murakawa K."/>
            <person name="Fujimori K."/>
            <person name="Tanai H."/>
            <person name="Kimata M."/>
            <person name="Watanabe M."/>
            <person name="Hiraoka S."/>
            <person name="Chiba Y."/>
            <person name="Ishida S."/>
            <person name="Ono Y."/>
            <person name="Takiguchi S."/>
            <person name="Watanabe S."/>
            <person name="Yosida M."/>
            <person name="Hotuta T."/>
            <person name="Kusano J."/>
            <person name="Kanehori K."/>
            <person name="Takahashi-Fujii A."/>
            <person name="Hara H."/>
            <person name="Tanase T.-O."/>
            <person name="Nomura Y."/>
            <person name="Togiya S."/>
            <person name="Komai F."/>
            <person name="Hara R."/>
            <person name="Takeuchi K."/>
            <person name="Arita M."/>
            <person name="Imose N."/>
            <person name="Musashino K."/>
            <person name="Yuuki H."/>
            <person name="Oshima A."/>
            <person name="Sasaki N."/>
            <person name="Aotsuka S."/>
            <person name="Yoshikawa Y."/>
            <person name="Matsunawa H."/>
            <person name="Ichihara T."/>
            <person name="Shiohata N."/>
            <person name="Sano S."/>
            <person name="Moriya S."/>
            <person name="Momiyama H."/>
            <person name="Satoh N."/>
            <person name="Takami S."/>
            <person name="Terashima Y."/>
            <person name="Suzuki O."/>
            <person name="Nakagawa S."/>
            <person name="Senoh A."/>
            <person name="Mizoguchi H."/>
            <person name="Goto Y."/>
            <person name="Shimizu F."/>
            <person name="Wakebe H."/>
            <person name="Hishigaki H."/>
            <person name="Watanabe T."/>
            <person name="Sugiyama A."/>
            <person name="Takemoto M."/>
            <person name="Kawakami B."/>
            <person name="Yamazaki M."/>
            <person name="Watanabe K."/>
            <person name="Kumagai A."/>
            <person name="Itakura S."/>
            <person name="Fukuzumi Y."/>
            <person name="Fujimori Y."/>
            <person name="Komiyama M."/>
            <person name="Tashiro H."/>
            <person name="Tanigami A."/>
            <person name="Fujiwara T."/>
            <person name="Ono T."/>
            <person name="Yamada K."/>
            <person name="Fujii Y."/>
            <person name="Ozaki K."/>
            <person name="Hirao M."/>
            <person name="Ohmori Y."/>
            <person name="Kawabata A."/>
            <person name="Hikiji T."/>
            <person name="Kobatake N."/>
            <person name="Inagaki H."/>
            <person name="Ikema Y."/>
            <person name="Okamoto S."/>
            <person name="Okitani R."/>
            <person name="Kawakami T."/>
            <person name="Noguchi S."/>
            <person name="Itoh T."/>
            <person name="Shigeta K."/>
            <person name="Senba T."/>
            <person name="Matsumura K."/>
            <person name="Nakajima Y."/>
            <person name="Mizuno T."/>
            <person name="Morinaga M."/>
            <person name="Sasaki M."/>
            <person name="Togashi T."/>
            <person name="Oyama M."/>
            <person name="Hata H."/>
            <person name="Watanabe M."/>
            <person name="Komatsu T."/>
            <person name="Mizushima-Sugano J."/>
            <person name="Satoh T."/>
            <person name="Shirai Y."/>
            <person name="Takahashi Y."/>
            <person name="Nakagawa K."/>
            <person name="Okumura K."/>
            <person name="Nagase T."/>
            <person name="Nomura N."/>
            <person name="Kikuchi H."/>
            <person name="Masuho Y."/>
            <person name="Yamashita R."/>
            <person name="Nakai K."/>
            <person name="Yada T."/>
            <person name="Nakamura Y."/>
            <person name="Ohara O."/>
            <person name="Isogai T."/>
            <person name="Sugano S."/>
        </authorList>
    </citation>
    <scope>NUCLEOTIDE SEQUENCE [LARGE SCALE MRNA]</scope>
    <source>
        <tissue>Umbilical cord blood</tissue>
    </source>
</reference>
<reference key="5">
    <citation type="submission" date="2005-07" db="EMBL/GenBank/DDBJ databases">
        <authorList>
            <person name="Mural R.J."/>
            <person name="Istrail S."/>
            <person name="Sutton G.G."/>
            <person name="Florea L."/>
            <person name="Halpern A.L."/>
            <person name="Mobarry C.M."/>
            <person name="Lippert R."/>
            <person name="Walenz B."/>
            <person name="Shatkay H."/>
            <person name="Dew I."/>
            <person name="Miller J.R."/>
            <person name="Flanigan M.J."/>
            <person name="Edwards N.J."/>
            <person name="Bolanos R."/>
            <person name="Fasulo D."/>
            <person name="Halldorsson B.V."/>
            <person name="Hannenhalli S."/>
            <person name="Turner R."/>
            <person name="Yooseph S."/>
            <person name="Lu F."/>
            <person name="Nusskern D.R."/>
            <person name="Shue B.C."/>
            <person name="Zheng X.H."/>
            <person name="Zhong F."/>
            <person name="Delcher A.L."/>
            <person name="Huson D.H."/>
            <person name="Kravitz S.A."/>
            <person name="Mouchard L."/>
            <person name="Reinert K."/>
            <person name="Remington K.A."/>
            <person name="Clark A.G."/>
            <person name="Waterman M.S."/>
            <person name="Eichler E.E."/>
            <person name="Adams M.D."/>
            <person name="Hunkapiller M.W."/>
            <person name="Myers E.W."/>
            <person name="Venter J.C."/>
        </authorList>
    </citation>
    <scope>NUCLEOTIDE SEQUENCE [LARGE SCALE GENOMIC DNA]</scope>
</reference>
<reference key="6">
    <citation type="journal article" date="2004" name="Genome Res.">
        <title>The status, quality, and expansion of the NIH full-length cDNA project: the Mammalian Gene Collection (MGC).</title>
        <authorList>
            <consortium name="The MGC Project Team"/>
        </authorList>
    </citation>
    <scope>NUCLEOTIDE SEQUENCE [LARGE SCALE MRNA]</scope>
    <source>
        <tissue>Lung</tissue>
    </source>
</reference>
<reference key="7">
    <citation type="journal article" date="1995" name="FEBS Lett.">
        <title>Interaction of the protein nucleobindin with G alpha i2, as revealed by the yeast two-hybrid system.</title>
        <authorList>
            <person name="Mochizuki N."/>
            <person name="Hibi M."/>
            <person name="Kanai Y."/>
            <person name="Insel P.A."/>
        </authorList>
    </citation>
    <scope>CHARACTERIZATION</scope>
</reference>
<reference key="8">
    <citation type="journal article" date="2011" name="BMC Syst. Biol.">
        <title>Initial characterization of the human central proteome.</title>
        <authorList>
            <person name="Burkard T.R."/>
            <person name="Planyavsky M."/>
            <person name="Kaupe I."/>
            <person name="Breitwieser F.P."/>
            <person name="Buerckstuemmer T."/>
            <person name="Bennett K.L."/>
            <person name="Superti-Furga G."/>
            <person name="Colinge J."/>
        </authorList>
    </citation>
    <scope>IDENTIFICATION BY MASS SPECTROMETRY [LARGE SCALE ANALYSIS]</scope>
</reference>
<reference key="9">
    <citation type="journal article" date="2012" name="J. Proteome Res.">
        <title>Resveratrol-induced changes of the human adipocyte secretion profile.</title>
        <authorList>
            <person name="Rosenow A."/>
            <person name="Noben J.P."/>
            <person name="Jocken J."/>
            <person name="Kallendrusch S."/>
            <person name="Fischer-Posovszky P."/>
            <person name="Mariman E.C."/>
            <person name="Renes J."/>
        </authorList>
    </citation>
    <scope>IDENTIFICATION BY MASS SPECTROMETRY [LARGE SCALE ANALYSIS]</scope>
</reference>
<reference key="10">
    <citation type="journal article" date="2013" name="J. Proteome Res.">
        <title>LC-MS/MS characterization of O-glycosylation sites and glycan structures of human cerebrospinal fluid glycoproteins.</title>
        <authorList>
            <person name="Halim A."/>
            <person name="Ruetschi U."/>
            <person name="Larson G."/>
            <person name="Nilsson J."/>
        </authorList>
    </citation>
    <scope>GLYCOSYLATION</scope>
    <scope>IDENTIFICATION BY MASS SPECTROMETRY</scope>
</reference>
<reference key="11">
    <citation type="journal article" date="2014" name="J. Proteomics">
        <title>An enzyme assisted RP-RPLC approach for in-depth analysis of human liver phosphoproteome.</title>
        <authorList>
            <person name="Bian Y."/>
            <person name="Song C."/>
            <person name="Cheng K."/>
            <person name="Dong M."/>
            <person name="Wang F."/>
            <person name="Huang J."/>
            <person name="Sun D."/>
            <person name="Wang L."/>
            <person name="Ye M."/>
            <person name="Zou H."/>
        </authorList>
    </citation>
    <scope>PHOSPHORYLATION [LARGE SCALE ANALYSIS] AT THR-148</scope>
    <scope>IDENTIFICATION BY MASS SPECTROMETRY [LARGE SCALE ANALYSIS]</scope>
    <source>
        <tissue>Liver</tissue>
    </source>
</reference>
<reference key="12">
    <citation type="journal article" date="2015" name="Cell">
        <title>A single kinase generates the majority of the secreted phosphoproteome.</title>
        <authorList>
            <person name="Tagliabracci V.S."/>
            <person name="Wiley S.E."/>
            <person name="Guo X."/>
            <person name="Kinch L.N."/>
            <person name="Durrant E."/>
            <person name="Wen J."/>
            <person name="Xiao J."/>
            <person name="Cui J."/>
            <person name="Nguyen K.B."/>
            <person name="Engel J.L."/>
            <person name="Coon J.J."/>
            <person name="Grishin N."/>
            <person name="Pinna L.A."/>
            <person name="Pagliarini D.J."/>
            <person name="Dixon J.E."/>
        </authorList>
    </citation>
    <scope>PHOSPHORYLATION AT SER-86; THR-148 AND SER-369</scope>
</reference>
<reference key="13">
    <citation type="journal article" date="2018" name="J. Biol. Chem.">
        <title>A biochemical and genetic discovery pipeline identifies PLCdelta4b as a nonreceptor activator of heterotrimeric G-proteins.</title>
        <authorList>
            <person name="Maziarz M."/>
            <person name="Broselid S."/>
            <person name="DiGiacomo V."/>
            <person name="Park J.C."/>
            <person name="Luebbers A."/>
            <person name="Garcia-Navarrete L."/>
            <person name="Blanco-Canosa J.B."/>
            <person name="Baillie G.S."/>
            <person name="Garcia-Marcos M."/>
        </authorList>
    </citation>
    <scope>GBA MOTIF</scope>
</reference>
<reference key="14">
    <citation type="journal article" date="2004" name="Biochemistry">
        <title>Structural studies on the Ca2+-binding domain of human nucleobindin (Calnuc).</title>
        <authorList>
            <person name="de Alba E."/>
            <person name="Tjandra N."/>
        </authorList>
    </citation>
    <scope>STRUCTURE BY NMR OF 228-326</scope>
    <scope>CALCIUM-BINDING</scope>
    <scope>DOMAIN</scope>
</reference>
<accession>Q02818</accession>
<accession>B2RD64</accession>
<accession>Q15838</accession>
<accession>Q7Z4J7</accession>
<accession>Q9BUR1</accession>
<protein>
    <recommendedName>
        <fullName>Nucleobindin-1</fullName>
    </recommendedName>
    <alternativeName>
        <fullName>CALNUC</fullName>
    </alternativeName>
</protein>
<gene>
    <name type="primary">NUCB1</name>
    <name type="synonym">NUC</name>
</gene>
<proteinExistence type="evidence at protein level"/>
<keyword id="KW-0002">3D-structure</keyword>
<keyword id="KW-0106">Calcium</keyword>
<keyword id="KW-0175">Coiled coil</keyword>
<keyword id="KW-0963">Cytoplasm</keyword>
<keyword id="KW-0238">DNA-binding</keyword>
<keyword id="KW-0325">Glycoprotein</keyword>
<keyword id="KW-0333">Golgi apparatus</keyword>
<keyword id="KW-0344">Guanine-nucleotide releasing factor</keyword>
<keyword id="KW-0472">Membrane</keyword>
<keyword id="KW-0479">Metal-binding</keyword>
<keyword id="KW-0597">Phosphoprotein</keyword>
<keyword id="KW-1267">Proteomics identification</keyword>
<keyword id="KW-1185">Reference proteome</keyword>
<keyword id="KW-0677">Repeat</keyword>
<keyword id="KW-0964">Secreted</keyword>
<keyword id="KW-0732">Signal</keyword>
<evidence type="ECO:0000250" key="1"/>
<evidence type="ECO:0000250" key="2">
    <source>
        <dbReference type="UniProtKB" id="Q0P569"/>
    </source>
</evidence>
<evidence type="ECO:0000250" key="3">
    <source>
        <dbReference type="UniProtKB" id="Q63083"/>
    </source>
</evidence>
<evidence type="ECO:0000255" key="4"/>
<evidence type="ECO:0000255" key="5">
    <source>
        <dbReference type="PROSITE-ProRule" id="PRU00448"/>
    </source>
</evidence>
<evidence type="ECO:0000256" key="6">
    <source>
        <dbReference type="SAM" id="MobiDB-lite"/>
    </source>
</evidence>
<evidence type="ECO:0000269" key="7">
    <source>
    </source>
</evidence>
<evidence type="ECO:0000269" key="8">
    <source>
    </source>
</evidence>
<evidence type="ECO:0000269" key="9">
    <source>
    </source>
</evidence>
<evidence type="ECO:0000269" key="10">
    <source>
    </source>
</evidence>
<evidence type="ECO:0000269" key="11">
    <source>
    </source>
</evidence>
<evidence type="ECO:0000305" key="12"/>
<evidence type="ECO:0007744" key="13">
    <source>
    </source>
</evidence>
<evidence type="ECO:0007829" key="14">
    <source>
        <dbReference type="PDB" id="1SNL"/>
    </source>
</evidence>
<dbReference type="EMBL" id="M96824">
    <property type="protein sequence ID" value="AAA36383.1"/>
    <property type="molecule type" value="mRNA"/>
</dbReference>
<dbReference type="EMBL" id="U31342">
    <property type="protein sequence ID" value="AAB60431.1"/>
    <property type="molecule type" value="Genomic_DNA"/>
</dbReference>
<dbReference type="EMBL" id="U31336">
    <property type="protein sequence ID" value="AAB60431.1"/>
    <property type="status" value="JOINED"/>
    <property type="molecule type" value="Genomic_DNA"/>
</dbReference>
<dbReference type="EMBL" id="U31337">
    <property type="protein sequence ID" value="AAB60431.1"/>
    <property type="status" value="JOINED"/>
    <property type="molecule type" value="Genomic_DNA"/>
</dbReference>
<dbReference type="EMBL" id="U31338">
    <property type="protein sequence ID" value="AAB60431.1"/>
    <property type="status" value="JOINED"/>
    <property type="molecule type" value="Genomic_DNA"/>
</dbReference>
<dbReference type="EMBL" id="U31340">
    <property type="protein sequence ID" value="AAB60431.1"/>
    <property type="status" value="JOINED"/>
    <property type="molecule type" value="Genomic_DNA"/>
</dbReference>
<dbReference type="EMBL" id="U31341">
    <property type="protein sequence ID" value="AAB60431.1"/>
    <property type="status" value="JOINED"/>
    <property type="molecule type" value="Genomic_DNA"/>
</dbReference>
<dbReference type="EMBL" id="BT009828">
    <property type="protein sequence ID" value="AAP88830.1"/>
    <property type="molecule type" value="mRNA"/>
</dbReference>
<dbReference type="EMBL" id="AK315422">
    <property type="protein sequence ID" value="BAG37811.1"/>
    <property type="molecule type" value="mRNA"/>
</dbReference>
<dbReference type="EMBL" id="CH471177">
    <property type="protein sequence ID" value="EAW52411.1"/>
    <property type="molecule type" value="Genomic_DNA"/>
</dbReference>
<dbReference type="EMBL" id="BC002356">
    <property type="protein sequence ID" value="AAH02356.1"/>
    <property type="molecule type" value="mRNA"/>
</dbReference>
<dbReference type="CCDS" id="CCDS12740.1"/>
<dbReference type="RefSeq" id="NP_006175.2">
    <property type="nucleotide sequence ID" value="NM_006184.5"/>
</dbReference>
<dbReference type="RefSeq" id="XP_016882334.1">
    <property type="nucleotide sequence ID" value="XM_017026845.2"/>
</dbReference>
<dbReference type="RefSeq" id="XP_054177100.1">
    <property type="nucleotide sequence ID" value="XM_054321125.1"/>
</dbReference>
<dbReference type="PDB" id="1SNL">
    <property type="method" value="NMR"/>
    <property type="chains" value="A=228-326"/>
</dbReference>
<dbReference type="PDBsum" id="1SNL"/>
<dbReference type="BMRB" id="Q02818"/>
<dbReference type="SMR" id="Q02818"/>
<dbReference type="BioGRID" id="110978">
    <property type="interactions" value="101"/>
</dbReference>
<dbReference type="FunCoup" id="Q02818">
    <property type="interactions" value="1953"/>
</dbReference>
<dbReference type="IntAct" id="Q02818">
    <property type="interactions" value="49"/>
</dbReference>
<dbReference type="MINT" id="Q02818"/>
<dbReference type="STRING" id="9606.ENSP00000385923"/>
<dbReference type="DrugBank" id="DB11093">
    <property type="generic name" value="Calcium citrate"/>
</dbReference>
<dbReference type="DrugBank" id="DB11348">
    <property type="generic name" value="Calcium Phosphate"/>
</dbReference>
<dbReference type="DrugBank" id="DB14481">
    <property type="generic name" value="Calcium phosphate dihydrate"/>
</dbReference>
<dbReference type="GuidetoPHARMACOLOGY" id="2871"/>
<dbReference type="GlyCosmos" id="Q02818">
    <property type="glycosylation" value="4 sites, 7 glycans"/>
</dbReference>
<dbReference type="GlyGen" id="Q02818">
    <property type="glycosylation" value="24 sites, 8 O-linked glycans (19 sites)"/>
</dbReference>
<dbReference type="iPTMnet" id="Q02818"/>
<dbReference type="MetOSite" id="Q02818"/>
<dbReference type="PhosphoSitePlus" id="Q02818"/>
<dbReference type="SwissPalm" id="Q02818"/>
<dbReference type="BioMuta" id="NUCB1"/>
<dbReference type="DMDM" id="90110780"/>
<dbReference type="jPOST" id="Q02818"/>
<dbReference type="MassIVE" id="Q02818"/>
<dbReference type="PaxDb" id="9606-ENSP00000385923"/>
<dbReference type="PeptideAtlas" id="Q02818"/>
<dbReference type="ProteomicsDB" id="58128"/>
<dbReference type="Pumba" id="Q02818"/>
<dbReference type="Antibodypedia" id="2173">
    <property type="antibodies" value="308 antibodies from 30 providers"/>
</dbReference>
<dbReference type="DNASU" id="4924"/>
<dbReference type="Ensembl" id="ENST00000405315.9">
    <property type="protein sequence ID" value="ENSP00000385923.3"/>
    <property type="gene ID" value="ENSG00000104805.17"/>
</dbReference>
<dbReference type="Ensembl" id="ENST00000407032.5">
    <property type="protein sequence ID" value="ENSP00000385211.1"/>
    <property type="gene ID" value="ENSG00000104805.17"/>
</dbReference>
<dbReference type="Ensembl" id="ENST00000411700.6">
    <property type="protein sequence ID" value="ENSP00000410519.2"/>
    <property type="gene ID" value="ENSG00000104805.17"/>
</dbReference>
<dbReference type="Ensembl" id="ENST00000451312.6">
    <property type="protein sequence ID" value="ENSP00000397201.2"/>
    <property type="gene ID" value="ENSG00000104805.17"/>
</dbReference>
<dbReference type="Ensembl" id="ENST00000706746.1">
    <property type="protein sequence ID" value="ENSP00000516525.1"/>
    <property type="gene ID" value="ENSG00000104805.17"/>
</dbReference>
<dbReference type="GeneID" id="4924"/>
<dbReference type="KEGG" id="hsa:4924"/>
<dbReference type="MANE-Select" id="ENST00000405315.9">
    <property type="protein sequence ID" value="ENSP00000385923.3"/>
    <property type="RefSeq nucleotide sequence ID" value="NM_006184.6"/>
    <property type="RefSeq protein sequence ID" value="NP_006175.2"/>
</dbReference>
<dbReference type="UCSC" id="uc002plb.5">
    <property type="organism name" value="human"/>
</dbReference>
<dbReference type="AGR" id="HGNC:8043"/>
<dbReference type="CTD" id="4924"/>
<dbReference type="DisGeNET" id="4924"/>
<dbReference type="GeneCards" id="NUCB1"/>
<dbReference type="HGNC" id="HGNC:8043">
    <property type="gene designation" value="NUCB1"/>
</dbReference>
<dbReference type="HPA" id="ENSG00000104805">
    <property type="expression patterns" value="Low tissue specificity"/>
</dbReference>
<dbReference type="MIM" id="601323">
    <property type="type" value="gene"/>
</dbReference>
<dbReference type="neXtProt" id="NX_Q02818"/>
<dbReference type="OpenTargets" id="ENSG00000104805"/>
<dbReference type="PharmGKB" id="PA31825"/>
<dbReference type="VEuPathDB" id="HostDB:ENSG00000104805"/>
<dbReference type="eggNOG" id="KOG3866">
    <property type="taxonomic scope" value="Eukaryota"/>
</dbReference>
<dbReference type="GeneTree" id="ENSGT00390000001927"/>
<dbReference type="HOGENOM" id="CLU_031153_1_0_1"/>
<dbReference type="InParanoid" id="Q02818"/>
<dbReference type="OMA" id="VWEDTDK"/>
<dbReference type="OrthoDB" id="5982823at2759"/>
<dbReference type="PAN-GO" id="Q02818">
    <property type="GO annotations" value="2 GO annotations based on evolutionary models"/>
</dbReference>
<dbReference type="PhylomeDB" id="Q02818"/>
<dbReference type="TreeFam" id="TF323218"/>
<dbReference type="PathwayCommons" id="Q02818"/>
<dbReference type="Reactome" id="R-HSA-381426">
    <property type="pathway name" value="Regulation of Insulin-like Growth Factor (IGF) transport and uptake by Insulin-like Growth Factor Binding Proteins (IGFBPs)"/>
</dbReference>
<dbReference type="Reactome" id="R-HSA-8957275">
    <property type="pathway name" value="Post-translational protein phosphorylation"/>
</dbReference>
<dbReference type="SignaLink" id="Q02818"/>
<dbReference type="SIGNOR" id="Q02818"/>
<dbReference type="BioGRID-ORCS" id="4924">
    <property type="hits" value="275 hits in 1151 CRISPR screens"/>
</dbReference>
<dbReference type="ChiTaRS" id="NUCB1">
    <property type="organism name" value="human"/>
</dbReference>
<dbReference type="EvolutionaryTrace" id="Q02818"/>
<dbReference type="GeneWiki" id="NUCB1"/>
<dbReference type="GenomeRNAi" id="4924"/>
<dbReference type="Pharos" id="Q02818">
    <property type="development level" value="Tchem"/>
</dbReference>
<dbReference type="PRO" id="PR:Q02818"/>
<dbReference type="Proteomes" id="UP000005640">
    <property type="component" value="Chromosome 19"/>
</dbReference>
<dbReference type="RNAct" id="Q02818">
    <property type="molecule type" value="protein"/>
</dbReference>
<dbReference type="Bgee" id="ENSG00000104805">
    <property type="expression patterns" value="Expressed in stromal cell of endometrium and 197 other cell types or tissues"/>
</dbReference>
<dbReference type="ExpressionAtlas" id="Q02818">
    <property type="expression patterns" value="baseline and differential"/>
</dbReference>
<dbReference type="GO" id="GO:0005788">
    <property type="term" value="C:endoplasmic reticulum lumen"/>
    <property type="evidence" value="ECO:0000304"/>
    <property type="project" value="Reactome"/>
</dbReference>
<dbReference type="GO" id="GO:0005793">
    <property type="term" value="C:endoplasmic reticulum-Golgi intermediate compartment"/>
    <property type="evidence" value="ECO:0000314"/>
    <property type="project" value="UniProtKB"/>
</dbReference>
<dbReference type="GO" id="GO:0070062">
    <property type="term" value="C:extracellular exosome"/>
    <property type="evidence" value="ECO:0007005"/>
    <property type="project" value="UniProtKB"/>
</dbReference>
<dbReference type="GO" id="GO:0005615">
    <property type="term" value="C:extracellular space"/>
    <property type="evidence" value="ECO:0007005"/>
    <property type="project" value="UniProtKB"/>
</dbReference>
<dbReference type="GO" id="GO:0005794">
    <property type="term" value="C:Golgi apparatus"/>
    <property type="evidence" value="ECO:0007669"/>
    <property type="project" value="UniProtKB-SubCell"/>
</dbReference>
<dbReference type="GO" id="GO:0016020">
    <property type="term" value="C:membrane"/>
    <property type="evidence" value="ECO:0007005"/>
    <property type="project" value="UniProtKB"/>
</dbReference>
<dbReference type="GO" id="GO:0005509">
    <property type="term" value="F:calcium ion binding"/>
    <property type="evidence" value="ECO:0000318"/>
    <property type="project" value="GO_Central"/>
</dbReference>
<dbReference type="GO" id="GO:0003677">
    <property type="term" value="F:DNA binding"/>
    <property type="evidence" value="ECO:0007669"/>
    <property type="project" value="UniProtKB-KW"/>
</dbReference>
<dbReference type="GO" id="GO:0001965">
    <property type="term" value="F:G-protein alpha-subunit binding"/>
    <property type="evidence" value="ECO:0000250"/>
    <property type="project" value="UniProtKB"/>
</dbReference>
<dbReference type="GO" id="GO:0005085">
    <property type="term" value="F:guanyl-nucleotide exchange factor activity"/>
    <property type="evidence" value="ECO:0000250"/>
    <property type="project" value="UniProtKB"/>
</dbReference>
<dbReference type="GO" id="GO:0007264">
    <property type="term" value="P:small GTPase-mediated signal transduction"/>
    <property type="evidence" value="ECO:0000250"/>
    <property type="project" value="UniProtKB"/>
</dbReference>
<dbReference type="FunFam" id="1.10.238.10:FF:000045">
    <property type="entry name" value="Nucleobindin 2"/>
    <property type="match status" value="1"/>
</dbReference>
<dbReference type="Gene3D" id="1.10.238.10">
    <property type="entry name" value="EF-hand"/>
    <property type="match status" value="1"/>
</dbReference>
<dbReference type="InterPro" id="IPR011992">
    <property type="entry name" value="EF-hand-dom_pair"/>
</dbReference>
<dbReference type="InterPro" id="IPR018247">
    <property type="entry name" value="EF_Hand_1_Ca_BS"/>
</dbReference>
<dbReference type="InterPro" id="IPR002048">
    <property type="entry name" value="EF_hand_dom"/>
</dbReference>
<dbReference type="InterPro" id="IPR040250">
    <property type="entry name" value="Nucleobindin"/>
</dbReference>
<dbReference type="PANTHER" id="PTHR19237">
    <property type="entry name" value="NUCLEOBINDIN"/>
    <property type="match status" value="1"/>
</dbReference>
<dbReference type="PANTHER" id="PTHR19237:SF21">
    <property type="entry name" value="NUCLEOBINDIN-1"/>
    <property type="match status" value="1"/>
</dbReference>
<dbReference type="Pfam" id="PF25434">
    <property type="entry name" value="NUCB1_N"/>
    <property type="match status" value="1"/>
</dbReference>
<dbReference type="SUPFAM" id="SSF47473">
    <property type="entry name" value="EF-hand"/>
    <property type="match status" value="1"/>
</dbReference>
<dbReference type="PROSITE" id="PS00018">
    <property type="entry name" value="EF_HAND_1"/>
    <property type="match status" value="2"/>
</dbReference>
<dbReference type="PROSITE" id="PS50222">
    <property type="entry name" value="EF_HAND_2"/>
    <property type="match status" value="2"/>
</dbReference>
<name>NUCB1_HUMAN</name>